<dbReference type="SMR" id="Q5DRE5"/>
<dbReference type="FunCoup" id="Q5DRE5">
    <property type="interactions" value="195"/>
</dbReference>
<dbReference type="GlyCosmos" id="Q5DRE5">
    <property type="glycosylation" value="3 sites, No reported glycans"/>
</dbReference>
<dbReference type="PaxDb" id="9598-ENSPTRP00000056340"/>
<dbReference type="eggNOG" id="KOG3594">
    <property type="taxonomic scope" value="Eukaryota"/>
</dbReference>
<dbReference type="InParanoid" id="Q5DRE5"/>
<dbReference type="Proteomes" id="UP000002277">
    <property type="component" value="Unplaced"/>
</dbReference>
<dbReference type="GO" id="GO:0005886">
    <property type="term" value="C:plasma membrane"/>
    <property type="evidence" value="ECO:0000250"/>
    <property type="project" value="UniProtKB"/>
</dbReference>
<dbReference type="GO" id="GO:0005509">
    <property type="term" value="F:calcium ion binding"/>
    <property type="evidence" value="ECO:0000250"/>
    <property type="project" value="UniProtKB"/>
</dbReference>
<dbReference type="GO" id="GO:0042802">
    <property type="term" value="F:identical protein binding"/>
    <property type="evidence" value="ECO:0000250"/>
    <property type="project" value="UniProtKB"/>
</dbReference>
<dbReference type="GO" id="GO:0007155">
    <property type="term" value="P:cell adhesion"/>
    <property type="evidence" value="ECO:0000318"/>
    <property type="project" value="GO_Central"/>
</dbReference>
<dbReference type="GO" id="GO:0009988">
    <property type="term" value="P:cell-cell recognition"/>
    <property type="evidence" value="ECO:0000250"/>
    <property type="project" value="UniProtKB"/>
</dbReference>
<dbReference type="GO" id="GO:0007156">
    <property type="term" value="P:homophilic cell adhesion via plasma membrane adhesion molecules"/>
    <property type="evidence" value="ECO:0000250"/>
    <property type="project" value="UniProtKB"/>
</dbReference>
<dbReference type="GO" id="GO:0007399">
    <property type="term" value="P:nervous system development"/>
    <property type="evidence" value="ECO:0007669"/>
    <property type="project" value="UniProtKB-ARBA"/>
</dbReference>
<dbReference type="CDD" id="cd11304">
    <property type="entry name" value="Cadherin_repeat"/>
    <property type="match status" value="6"/>
</dbReference>
<dbReference type="FunFam" id="2.60.40.60:FF:000001">
    <property type="entry name" value="Protocadherin alpha 2"/>
    <property type="match status" value="1"/>
</dbReference>
<dbReference type="FunFam" id="2.60.40.60:FF:000002">
    <property type="entry name" value="Protocadherin alpha 2"/>
    <property type="match status" value="1"/>
</dbReference>
<dbReference type="FunFam" id="2.60.40.60:FF:000003">
    <property type="entry name" value="Protocadherin alpha 2"/>
    <property type="match status" value="1"/>
</dbReference>
<dbReference type="FunFam" id="2.60.40.60:FF:000006">
    <property type="entry name" value="Protocadherin alpha 2"/>
    <property type="match status" value="1"/>
</dbReference>
<dbReference type="FunFam" id="2.60.40.60:FF:000007">
    <property type="entry name" value="Protocadherin alpha 2"/>
    <property type="match status" value="1"/>
</dbReference>
<dbReference type="FunFam" id="2.60.40.60:FF:000076">
    <property type="entry name" value="Protocadherin alpha 2"/>
    <property type="match status" value="1"/>
</dbReference>
<dbReference type="Gene3D" id="2.60.40.60">
    <property type="entry name" value="Cadherins"/>
    <property type="match status" value="6"/>
</dbReference>
<dbReference type="InterPro" id="IPR002126">
    <property type="entry name" value="Cadherin-like_dom"/>
</dbReference>
<dbReference type="InterPro" id="IPR015919">
    <property type="entry name" value="Cadherin-like_sf"/>
</dbReference>
<dbReference type="InterPro" id="IPR031904">
    <property type="entry name" value="Cadherin_CBD"/>
</dbReference>
<dbReference type="InterPro" id="IPR020894">
    <property type="entry name" value="Cadherin_CS"/>
</dbReference>
<dbReference type="InterPro" id="IPR013164">
    <property type="entry name" value="Cadherin_N"/>
</dbReference>
<dbReference type="InterPro" id="IPR050174">
    <property type="entry name" value="Protocadherin/Cadherin-CA"/>
</dbReference>
<dbReference type="PANTHER" id="PTHR24028">
    <property type="entry name" value="CADHERIN-87A"/>
    <property type="match status" value="1"/>
</dbReference>
<dbReference type="PANTHER" id="PTHR24028:SF225">
    <property type="entry name" value="PROTOCADHERIN ALPHA-7"/>
    <property type="match status" value="1"/>
</dbReference>
<dbReference type="Pfam" id="PF00028">
    <property type="entry name" value="Cadherin"/>
    <property type="match status" value="5"/>
</dbReference>
<dbReference type="Pfam" id="PF08266">
    <property type="entry name" value="Cadherin_2"/>
    <property type="match status" value="1"/>
</dbReference>
<dbReference type="Pfam" id="PF15974">
    <property type="entry name" value="Cadherin_tail"/>
    <property type="match status" value="1"/>
</dbReference>
<dbReference type="PRINTS" id="PR00205">
    <property type="entry name" value="CADHERIN"/>
</dbReference>
<dbReference type="SMART" id="SM00112">
    <property type="entry name" value="CA"/>
    <property type="match status" value="6"/>
</dbReference>
<dbReference type="SUPFAM" id="SSF49313">
    <property type="entry name" value="Cadherin-like"/>
    <property type="match status" value="6"/>
</dbReference>
<dbReference type="PROSITE" id="PS00232">
    <property type="entry name" value="CADHERIN_1"/>
    <property type="match status" value="5"/>
</dbReference>
<dbReference type="PROSITE" id="PS50268">
    <property type="entry name" value="CADHERIN_2"/>
    <property type="match status" value="6"/>
</dbReference>
<feature type="signal peptide" evidence="3">
    <location>
        <begin position="1"/>
        <end position="29"/>
    </location>
</feature>
<feature type="chain" id="PRO_0000003897" description="Protocadherin alpha-7">
    <location>
        <begin position="30"/>
        <end position="937"/>
    </location>
</feature>
<feature type="topological domain" description="Extracellular" evidence="1">
    <location>
        <begin position="30"/>
        <end position="697"/>
    </location>
</feature>
<feature type="transmembrane region" description="Helical" evidence="3">
    <location>
        <begin position="698"/>
        <end position="718"/>
    </location>
</feature>
<feature type="topological domain" description="Cytoplasmic" evidence="1">
    <location>
        <begin position="719"/>
        <end position="937"/>
    </location>
</feature>
<feature type="domain" description="Cadherin 1" evidence="4">
    <location>
        <begin position="30"/>
        <end position="133"/>
    </location>
</feature>
<feature type="domain" description="Cadherin 2" evidence="4">
    <location>
        <begin position="134"/>
        <end position="242"/>
    </location>
</feature>
<feature type="domain" description="Cadherin 3" evidence="4">
    <location>
        <begin position="243"/>
        <end position="350"/>
    </location>
</feature>
<feature type="domain" description="Cadherin 4" evidence="4">
    <location>
        <begin position="351"/>
        <end position="455"/>
    </location>
</feature>
<feature type="domain" description="Cadherin 5" evidence="4">
    <location>
        <begin position="456"/>
        <end position="565"/>
    </location>
</feature>
<feature type="domain" description="Cadherin 6" evidence="4">
    <location>
        <begin position="581"/>
        <end position="678"/>
    </location>
</feature>
<feature type="repeat" description="PXXP 1">
    <location>
        <begin position="774"/>
        <end position="777"/>
    </location>
</feature>
<feature type="repeat" description="PXXP 2">
    <location>
        <begin position="786"/>
        <end position="789"/>
    </location>
</feature>
<feature type="repeat" description="PXXP 3">
    <location>
        <begin position="819"/>
        <end position="822"/>
    </location>
</feature>
<feature type="repeat" description="PXXP 4">
    <location>
        <begin position="860"/>
        <end position="863"/>
    </location>
</feature>
<feature type="repeat" description="PXXP 5">
    <location>
        <begin position="878"/>
        <end position="881"/>
    </location>
</feature>
<feature type="region of interest" description="Disordered" evidence="5">
    <location>
        <begin position="756"/>
        <end position="795"/>
    </location>
</feature>
<feature type="region of interest" description="5 X 4 AA repeats of P-X-X-P">
    <location>
        <begin position="774"/>
        <end position="881"/>
    </location>
</feature>
<feature type="region of interest" description="Disordered" evidence="5">
    <location>
        <begin position="817"/>
        <end position="843"/>
    </location>
</feature>
<feature type="region of interest" description="Disordered" evidence="5">
    <location>
        <begin position="888"/>
        <end position="937"/>
    </location>
</feature>
<feature type="compositionally biased region" description="Polar residues" evidence="5">
    <location>
        <begin position="775"/>
        <end position="787"/>
    </location>
</feature>
<feature type="compositionally biased region" description="Basic and acidic residues" evidence="5">
    <location>
        <begin position="896"/>
        <end position="910"/>
    </location>
</feature>
<feature type="glycosylation site" description="N-linked (GlcNAc...) asparagine" evidence="3">
    <location>
        <position position="254"/>
    </location>
</feature>
<feature type="glycosylation site" description="N-linked (GlcNAc...) asparagine" evidence="3">
    <location>
        <position position="265"/>
    </location>
</feature>
<feature type="glycosylation site" description="N-linked (GlcNAc...) asparagine" evidence="3">
    <location>
        <position position="548"/>
    </location>
</feature>
<feature type="disulfide bond" evidence="1">
    <location>
        <begin position="96"/>
        <end position="102"/>
    </location>
</feature>
<gene>
    <name evidence="2" type="primary">PCDHA7</name>
</gene>
<evidence type="ECO:0000250" key="1">
    <source>
        <dbReference type="UniProtKB" id="Q91Y13"/>
    </source>
</evidence>
<evidence type="ECO:0000250" key="2">
    <source>
        <dbReference type="UniProtKB" id="Q9UN72"/>
    </source>
</evidence>
<evidence type="ECO:0000255" key="3"/>
<evidence type="ECO:0000255" key="4">
    <source>
        <dbReference type="PROSITE-ProRule" id="PRU00043"/>
    </source>
</evidence>
<evidence type="ECO:0000256" key="5">
    <source>
        <dbReference type="SAM" id="MobiDB-lite"/>
    </source>
</evidence>
<evidence type="ECO:0000305" key="6"/>
<proteinExistence type="inferred from homology"/>
<reference key="1">
    <citation type="journal article" date="2005" name="Nature">
        <title>Initial sequence of the chimpanzee genome and comparison with the human genome.</title>
        <authorList>
            <consortium name="Chimpanzee sequencing and analysis consortium"/>
        </authorList>
    </citation>
    <scope>NUCLEOTIDE SEQUENCE [LARGE SCALE GENOMIC DNA]</scope>
</reference>
<reference key="2">
    <citation type="journal article" date="2005" name="Genetics">
        <title>Comparative genomics and diversifying selection of the clustered vertebrate protocadherin genes.</title>
        <authorList>
            <person name="Wu Q."/>
        </authorList>
    </citation>
    <scope>IDENTIFICATION</scope>
</reference>
<comment type="function">
    <text evidence="1">Calcium-dependent cell-adhesion protein involved in cells self-recognition and non-self discrimination. Thereby, it is involved in the establishment and maintenance of specific neuronal connections in the brain.</text>
</comment>
<comment type="subunit">
    <text evidence="1">Forms homodimers in trans (molecules expressed by two different cells). Forms promiscuous heterodimers in cis (at the plasma membrane of the same cell) with other protocadherins.</text>
</comment>
<comment type="subcellular location">
    <subcellularLocation>
        <location evidence="1">Cell membrane</location>
        <topology evidence="1">Single-pass type I membrane protein</topology>
    </subcellularLocation>
</comment>
<comment type="domain">
    <text evidence="1">Cadherin 1 to cadherin 4 domains mediate homophilic trans-interaction, the interaction with an identical protocadherin expressed by a neighboring cell. This is a head-to-tail interaction, the cadherin 1 domain interacting with the cadherin 4 domain and the cadherin 2 domain interacting the cadherin 3 domain of the other protocadherin. The cadherin 6 domain mediates promiscuous interactions with protocadherins on the same cell membrane. Each cadherin domain binds three calcium ions.</text>
</comment>
<name>PCDA7_PANTR</name>
<accession>Q5DRE5</accession>
<keyword id="KW-0106">Calcium</keyword>
<keyword id="KW-0130">Cell adhesion</keyword>
<keyword id="KW-1003">Cell membrane</keyword>
<keyword id="KW-1015">Disulfide bond</keyword>
<keyword id="KW-0325">Glycoprotein</keyword>
<keyword id="KW-0472">Membrane</keyword>
<keyword id="KW-0479">Metal-binding</keyword>
<keyword id="KW-1185">Reference proteome</keyword>
<keyword id="KW-0677">Repeat</keyword>
<keyword id="KW-0732">Signal</keyword>
<keyword id="KW-0812">Transmembrane</keyword>
<keyword id="KW-1133">Transmembrane helix</keyword>
<protein>
    <recommendedName>
        <fullName evidence="6">Protocadherin alpha-7</fullName>
        <shortName evidence="6">PCDH-alpha-7</shortName>
    </recommendedName>
</protein>
<organism>
    <name type="scientific">Pan troglodytes</name>
    <name type="common">Chimpanzee</name>
    <dbReference type="NCBI Taxonomy" id="9598"/>
    <lineage>
        <taxon>Eukaryota</taxon>
        <taxon>Metazoa</taxon>
        <taxon>Chordata</taxon>
        <taxon>Craniata</taxon>
        <taxon>Vertebrata</taxon>
        <taxon>Euteleostomi</taxon>
        <taxon>Mammalia</taxon>
        <taxon>Eutheria</taxon>
        <taxon>Euarchontoglires</taxon>
        <taxon>Primates</taxon>
        <taxon>Haplorrhini</taxon>
        <taxon>Catarrhini</taxon>
        <taxon>Hominidae</taxon>
        <taxon>Pan</taxon>
    </lineage>
</organism>
<sequence length="937" mass="101012">MVCPNGYDPGGRHLLLFIIILAAWEAGRGQLHYSVPEEAKHGNFVGRIAQDLGLELAELVPRLFRVVCKFRGDLLEVNLQNGILFVNSRIDREELCGRSAECSIHLEVIVERPLQVFHVDVEVKDINDNPPVFPATQRNLFIAESRPLDSRFPLEGASDADIGENALLTYRLSPNEYFFLDVPTSNQQVKPLGLVLRKLLDREETPELHLLLTATDGGKPELTGTVQLLITVLDNNDNAPVFDRTLYTVKLPENVSIGTLVIHPNASDLDEGLNGDIIYSFSSDVSPDIKSKFHMDPLSGAITVIGHMDFEESRAHKIPVEAVDKGFPPLAGHCTVLVEVVDVNDNAPQLTLTSLSLPIPEDAQPGTVITLISVFDRDFGVNGQVTCSLTPHVPFKLVSTFKNYYSLVLDRALDRESVSAYELVVTARDGGSPSLWATASVSVEVADVNDNAPAFAQPEYTVFVKENNPPGCHIFTVSAGDADAQKNALVSYSLVERRVGERALSSYISVHAESGKVYVLQPLDHEELELLQFQVSARDAGVPPLGSNVTLQVFVLDENDNAPALLAPRVGGTGGAVRELVPRSVGAGHVVAKVRAVDADSGYNAWLSYELQPVAAGASIPFRVGLYTGEISTTRALDETDAPRHRLLVLVKDHGEPSLTATATVLVSLVESGQAPKASSRASLGIAGPETELVDVNVYLIIAICAVSSLLVLTLLLYTALRCSAPSSEGACSLIKPTLVCSSAVGSWSFSQQRRQRVCSGEGPPKTDLMAFSPSLPQGPSSTDNPRQPNPDWRYSASLRAGMHSSVHLEEAGILRAGPGGPDQQWPTVSSATPEPEAGEVSPPVGAGVNSNSWTFKYGPGNPKQSGPGELPDKFIIPGSPAIISIRQEPANSQIDKSDFITFGKKEETKKKKKKKKGNKTQEKKEKGNSTTDNSDQ</sequence>